<reference key="1">
    <citation type="journal article" date="2002" name="Nature">
        <title>Comparison of the genomes of two Xanthomonas pathogens with differing host specificities.</title>
        <authorList>
            <person name="da Silva A.C.R."/>
            <person name="Ferro J.A."/>
            <person name="Reinach F.C."/>
            <person name="Farah C.S."/>
            <person name="Furlan L.R."/>
            <person name="Quaggio R.B."/>
            <person name="Monteiro-Vitorello C.B."/>
            <person name="Van Sluys M.A."/>
            <person name="Almeida N.F. Jr."/>
            <person name="Alves L.M.C."/>
            <person name="do Amaral A.M."/>
            <person name="Bertolini M.C."/>
            <person name="Camargo L.E.A."/>
            <person name="Camarotte G."/>
            <person name="Cannavan F."/>
            <person name="Cardozo J."/>
            <person name="Chambergo F."/>
            <person name="Ciapina L.P."/>
            <person name="Cicarelli R.M.B."/>
            <person name="Coutinho L.L."/>
            <person name="Cursino-Santos J.R."/>
            <person name="El-Dorry H."/>
            <person name="Faria J.B."/>
            <person name="Ferreira A.J.S."/>
            <person name="Ferreira R.C.C."/>
            <person name="Ferro M.I.T."/>
            <person name="Formighieri E.F."/>
            <person name="Franco M.C."/>
            <person name="Greggio C.C."/>
            <person name="Gruber A."/>
            <person name="Katsuyama A.M."/>
            <person name="Kishi L.T."/>
            <person name="Leite R.P."/>
            <person name="Lemos E.G.M."/>
            <person name="Lemos M.V.F."/>
            <person name="Locali E.C."/>
            <person name="Machado M.A."/>
            <person name="Madeira A.M.B.N."/>
            <person name="Martinez-Rossi N.M."/>
            <person name="Martins E.C."/>
            <person name="Meidanis J."/>
            <person name="Menck C.F.M."/>
            <person name="Miyaki C.Y."/>
            <person name="Moon D.H."/>
            <person name="Moreira L.M."/>
            <person name="Novo M.T.M."/>
            <person name="Okura V.K."/>
            <person name="Oliveira M.C."/>
            <person name="Oliveira V.R."/>
            <person name="Pereira H.A."/>
            <person name="Rossi A."/>
            <person name="Sena J.A.D."/>
            <person name="Silva C."/>
            <person name="de Souza R.F."/>
            <person name="Spinola L.A.F."/>
            <person name="Takita M.A."/>
            <person name="Tamura R.E."/>
            <person name="Teixeira E.C."/>
            <person name="Tezza R.I.D."/>
            <person name="Trindade dos Santos M."/>
            <person name="Truffi D."/>
            <person name="Tsai S.M."/>
            <person name="White F.F."/>
            <person name="Setubal J.C."/>
            <person name="Kitajima J.P."/>
        </authorList>
    </citation>
    <scope>NUCLEOTIDE SEQUENCE [LARGE SCALE GENOMIC DNA]</scope>
    <source>
        <strain>ATCC 33913 / DSM 3586 / NCPPB 528 / LMG 568 / P 25</strain>
    </source>
</reference>
<protein>
    <recommendedName>
        <fullName>UPF0213 protein XCC3072</fullName>
    </recommendedName>
</protein>
<keyword id="KW-1185">Reference proteome</keyword>
<organism>
    <name type="scientific">Xanthomonas campestris pv. campestris (strain ATCC 33913 / DSM 3586 / NCPPB 528 / LMG 568 / P 25)</name>
    <dbReference type="NCBI Taxonomy" id="190485"/>
    <lineage>
        <taxon>Bacteria</taxon>
        <taxon>Pseudomonadati</taxon>
        <taxon>Pseudomonadota</taxon>
        <taxon>Gammaproteobacteria</taxon>
        <taxon>Lysobacterales</taxon>
        <taxon>Lysobacteraceae</taxon>
        <taxon>Xanthomonas</taxon>
    </lineage>
</organism>
<gene>
    <name type="ordered locus">XCC3072</name>
</gene>
<evidence type="ECO:0000255" key="1">
    <source>
        <dbReference type="PROSITE-ProRule" id="PRU00977"/>
    </source>
</evidence>
<evidence type="ECO:0000305" key="2"/>
<comment type="similarity">
    <text evidence="2">Belongs to the UPF0213 family.</text>
</comment>
<dbReference type="EMBL" id="AE008922">
    <property type="protein sequence ID" value="AAM42343.1"/>
    <property type="molecule type" value="Genomic_DNA"/>
</dbReference>
<dbReference type="RefSeq" id="NP_638419.1">
    <property type="nucleotide sequence ID" value="NC_003902.1"/>
</dbReference>
<dbReference type="RefSeq" id="WP_011038187.1">
    <property type="nucleotide sequence ID" value="NC_003902.1"/>
</dbReference>
<dbReference type="SMR" id="Q8P698"/>
<dbReference type="STRING" id="190485.XCC3072"/>
<dbReference type="EnsemblBacteria" id="AAM42343">
    <property type="protein sequence ID" value="AAM42343"/>
    <property type="gene ID" value="XCC3072"/>
</dbReference>
<dbReference type="KEGG" id="xcc:XCC3072"/>
<dbReference type="PATRIC" id="fig|190485.4.peg.3282"/>
<dbReference type="eggNOG" id="COG2827">
    <property type="taxonomic scope" value="Bacteria"/>
</dbReference>
<dbReference type="HOGENOM" id="CLU_135650_0_2_6"/>
<dbReference type="OrthoDB" id="9797095at2"/>
<dbReference type="Proteomes" id="UP000001010">
    <property type="component" value="Chromosome"/>
</dbReference>
<dbReference type="CDD" id="cd10456">
    <property type="entry name" value="GIY-YIG_UPF0213"/>
    <property type="match status" value="1"/>
</dbReference>
<dbReference type="Gene3D" id="3.40.1440.10">
    <property type="entry name" value="GIY-YIG endonuclease"/>
    <property type="match status" value="1"/>
</dbReference>
<dbReference type="InterPro" id="IPR000305">
    <property type="entry name" value="GIY-YIG_endonuc"/>
</dbReference>
<dbReference type="InterPro" id="IPR035901">
    <property type="entry name" value="GIY-YIG_endonuc_sf"/>
</dbReference>
<dbReference type="InterPro" id="IPR050190">
    <property type="entry name" value="UPF0213_domain"/>
</dbReference>
<dbReference type="PANTHER" id="PTHR34477">
    <property type="entry name" value="UPF0213 PROTEIN YHBQ"/>
    <property type="match status" value="1"/>
</dbReference>
<dbReference type="PANTHER" id="PTHR34477:SF1">
    <property type="entry name" value="UPF0213 PROTEIN YHBQ"/>
    <property type="match status" value="1"/>
</dbReference>
<dbReference type="Pfam" id="PF01541">
    <property type="entry name" value="GIY-YIG"/>
    <property type="match status" value="1"/>
</dbReference>
<dbReference type="SUPFAM" id="SSF82771">
    <property type="entry name" value="GIY-YIG endonuclease"/>
    <property type="match status" value="1"/>
</dbReference>
<dbReference type="PROSITE" id="PS50164">
    <property type="entry name" value="GIY_YIG"/>
    <property type="match status" value="1"/>
</dbReference>
<accession>Q8P698</accession>
<name>Y3072_XANCP</name>
<feature type="chain" id="PRO_0000161401" description="UPF0213 protein XCC3072">
    <location>
        <begin position="1"/>
        <end position="102"/>
    </location>
</feature>
<feature type="domain" description="GIY-YIG" evidence="1">
    <location>
        <begin position="5"/>
        <end position="80"/>
    </location>
</feature>
<sequence length="102" mass="11575">MDAPKPWHLYLLLCRNGSYYAGITNDLERRFQAHLRGTGARYTRANPPLQVLASHPYPDRATASRAEWLLKQQPRARKLAWLQAQGLLPAESRPDDTPLTPA</sequence>
<proteinExistence type="inferred from homology"/>